<evidence type="ECO:0000250" key="1">
    <source>
        <dbReference type="UniProtKB" id="F5B8W8"/>
    </source>
</evidence>
<evidence type="ECO:0000250" key="2">
    <source>
        <dbReference type="UniProtKB" id="P09930"/>
    </source>
</evidence>
<evidence type="ECO:0000250" key="3">
    <source>
        <dbReference type="UniProtKB" id="Q6PSU2"/>
    </source>
</evidence>
<evidence type="ECO:0000250" key="4">
    <source>
        <dbReference type="UniProtKB" id="Q99235"/>
    </source>
</evidence>
<evidence type="ECO:0000255" key="5"/>
<evidence type="ECO:0000269" key="6">
    <source>
    </source>
</evidence>
<evidence type="ECO:0000303" key="7">
    <source>
    </source>
</evidence>
<evidence type="ECO:0000305" key="8"/>
<evidence type="ECO:0000305" key="9">
    <source>
    </source>
</evidence>
<keyword id="KW-0020">Allergen</keyword>
<keyword id="KW-1015">Disulfide bond</keyword>
<keyword id="KW-0256">Endoplasmic reticulum</keyword>
<keyword id="KW-1185">Reference proteome</keyword>
<keyword id="KW-0732">Signal</keyword>
<comment type="subunit">
    <text evidence="1">Heterodimer of a small chain and a large chain; disulfide-linked.</text>
</comment>
<comment type="subcellular location">
    <subcellularLocation>
        <location evidence="4">Endoplasmic reticulum</location>
    </subcellularLocation>
</comment>
<comment type="developmental stage">
    <text evidence="6">Accumulates during seed development.</text>
</comment>
<comment type="allergen">
    <text evidence="9">Causes an allergic reaction in human.</text>
</comment>
<comment type="similarity">
    <text evidence="8">Belongs to the 2S seed storage albumins family.</text>
</comment>
<reference key="1">
    <citation type="journal article" date="2011" name="BMC Plant Biol.">
        <title>Identification and characterisation of seed storage protein transcripts from Lupinus angustifolius.</title>
        <authorList>
            <person name="Foley R.C."/>
            <person name="Gao L.-L."/>
            <person name="Spriggs A."/>
            <person name="Soo L.Y.C."/>
            <person name="Goggin D.E."/>
            <person name="Smith P.M.C."/>
            <person name="Atkins C.A."/>
            <person name="Singh K.B."/>
        </authorList>
    </citation>
    <scope>NUCLEOTIDE SEQUENCE [MRNA]</scope>
    <scope>DEVELOPMENTAL STAGE</scope>
    <scope>ALLERGEN</scope>
    <source>
        <strain>cv. Tanjil</strain>
        <tissue>Seed</tissue>
    </source>
</reference>
<reference key="2">
    <citation type="journal article" date="2017" name="Plant Biotechnol. J.">
        <title>A comprehensive draft genome sequence for lupin (Lupinus angustifolius), an emerging health food: insights into plant-microbe interactions and legume evolution.</title>
        <authorList>
            <person name="Hane J.K."/>
            <person name="Ming Y."/>
            <person name="Kamphuis L.G."/>
            <person name="Nelson M.N."/>
            <person name="Garg G."/>
            <person name="Atkins C.A."/>
            <person name="Bayer P.E."/>
            <person name="Bravo A."/>
            <person name="Bringans S."/>
            <person name="Cannon S."/>
            <person name="Edwards D."/>
            <person name="Foley R."/>
            <person name="Gao L.L."/>
            <person name="Harrison M.J."/>
            <person name="Huang W."/>
            <person name="Hurgobin B."/>
            <person name="Li S."/>
            <person name="Liu C.W."/>
            <person name="McGrath A."/>
            <person name="Morahan G."/>
            <person name="Murray J."/>
            <person name="Weller J."/>
            <person name="Jian J."/>
            <person name="Singh K.B."/>
        </authorList>
    </citation>
    <scope>NUCLEOTIDE SEQUENCE [LARGE SCALE GENOMIC DNA]</scope>
    <source>
        <strain>cv. Tanjil</strain>
        <tissue>Seedling</tissue>
    </source>
</reference>
<protein>
    <recommendedName>
        <fullName evidence="7">Conglutin delta 3</fullName>
    </recommendedName>
    <allergenName evidence="8">Lup an delta-conglutin</allergenName>
    <component>
        <recommendedName>
            <fullName evidence="1">Conglutin delta-3 large chain</fullName>
        </recommendedName>
    </component>
    <component>
        <recommendedName>
            <fullName evidence="1">Conglutin delta-3 small chain</fullName>
        </recommendedName>
    </component>
</protein>
<dbReference type="EMBL" id="HQ670420">
    <property type="protein sequence ID" value="AEB33723.1"/>
    <property type="molecule type" value="mRNA"/>
</dbReference>
<dbReference type="EMBL" id="CM007362">
    <property type="status" value="NOT_ANNOTATED_CDS"/>
    <property type="molecule type" value="Genomic_DNA"/>
</dbReference>
<dbReference type="RefSeq" id="NP_001413015.1">
    <property type="nucleotide sequence ID" value="NM_001426086.1"/>
</dbReference>
<dbReference type="RefSeq" id="XP_019420423.1">
    <property type="nucleotide sequence ID" value="XM_019564878.1"/>
</dbReference>
<dbReference type="SMR" id="F5B8X0"/>
<dbReference type="STRING" id="3871.F5B8X0"/>
<dbReference type="EnsemblPlants" id="OIV93891">
    <property type="protein sequence ID" value="OIV93891"/>
    <property type="gene ID" value="TanjilG_05594"/>
</dbReference>
<dbReference type="GeneID" id="109330626"/>
<dbReference type="Gramene" id="OIV93891">
    <property type="protein sequence ID" value="OIV93891"/>
    <property type="gene ID" value="TanjilG_05594"/>
</dbReference>
<dbReference type="KEGG" id="lang:109330626"/>
<dbReference type="OrthoDB" id="1424936at2759"/>
<dbReference type="Proteomes" id="UP000188354">
    <property type="component" value="Chromosome LG02"/>
</dbReference>
<dbReference type="GO" id="GO:0005783">
    <property type="term" value="C:endoplasmic reticulum"/>
    <property type="evidence" value="ECO:0007669"/>
    <property type="project" value="UniProtKB-SubCell"/>
</dbReference>
<dbReference type="GO" id="GO:0045735">
    <property type="term" value="F:nutrient reservoir activity"/>
    <property type="evidence" value="ECO:0007669"/>
    <property type="project" value="InterPro"/>
</dbReference>
<dbReference type="Gene3D" id="1.10.110.10">
    <property type="entry name" value="Plant lipid-transfer and hydrophobic proteins"/>
    <property type="match status" value="1"/>
</dbReference>
<dbReference type="InterPro" id="IPR036312">
    <property type="entry name" value="Bifun_inhib/LTP/seed_sf"/>
</dbReference>
<dbReference type="InterPro" id="IPR016140">
    <property type="entry name" value="Bifunc_inhib/LTP/seed_store"/>
</dbReference>
<dbReference type="InterPro" id="IPR000617">
    <property type="entry name" value="Napin/2SS/CON"/>
</dbReference>
<dbReference type="PANTHER" id="PTHR35496">
    <property type="entry name" value="2S SEED STORAGE PROTEIN 1-RELATED"/>
    <property type="match status" value="1"/>
</dbReference>
<dbReference type="PANTHER" id="PTHR35496:SF20">
    <property type="entry name" value="2S SEED STORAGE PROTEIN 1-RELATED"/>
    <property type="match status" value="1"/>
</dbReference>
<dbReference type="Pfam" id="PF00234">
    <property type="entry name" value="Tryp_alpha_amyl"/>
    <property type="match status" value="1"/>
</dbReference>
<dbReference type="SMART" id="SM00499">
    <property type="entry name" value="AAI"/>
    <property type="match status" value="1"/>
</dbReference>
<dbReference type="SUPFAM" id="SSF47699">
    <property type="entry name" value="Bifunctional inhibitor/lipid-transfer protein/seed storage 2S albumin"/>
    <property type="match status" value="1"/>
</dbReference>
<name>COND3_LUPAN</name>
<sequence length="149" mass="17407">MAKLTILIALVAALVLVVHTSAFRSSEQSCKRQLQQVNLRHCENHIDQRIQQQQEEEEDRARKLRGIKHVILRHKSSQESEELDQCCEQLNELNSQRCQCRALQQIYESQSEQCEGRQQEQQLEGELEKLPRICGFGPLRRCNINPDEE</sequence>
<accession>F5B8X0</accession>
<proteinExistence type="evidence at transcript level"/>
<organism>
    <name type="scientific">Lupinus angustifolius</name>
    <name type="common">Narrow-leaved blue lupine</name>
    <dbReference type="NCBI Taxonomy" id="3871"/>
    <lineage>
        <taxon>Eukaryota</taxon>
        <taxon>Viridiplantae</taxon>
        <taxon>Streptophyta</taxon>
        <taxon>Embryophyta</taxon>
        <taxon>Tracheophyta</taxon>
        <taxon>Spermatophyta</taxon>
        <taxon>Magnoliopsida</taxon>
        <taxon>eudicotyledons</taxon>
        <taxon>Gunneridae</taxon>
        <taxon>Pentapetalae</taxon>
        <taxon>rosids</taxon>
        <taxon>fabids</taxon>
        <taxon>Fabales</taxon>
        <taxon>Fabaceae</taxon>
        <taxon>Papilionoideae</taxon>
        <taxon>50 kb inversion clade</taxon>
        <taxon>genistoids sensu lato</taxon>
        <taxon>core genistoids</taxon>
        <taxon>Genisteae</taxon>
        <taxon>Lupinus</taxon>
    </lineage>
</organism>
<feature type="signal peptide" evidence="5">
    <location>
        <begin position="1"/>
        <end position="22"/>
    </location>
</feature>
<feature type="chain" id="PRO_5003325734" description="Conglutin delta 3">
    <location>
        <begin position="23"/>
        <end position="149"/>
    </location>
</feature>
<feature type="chain" id="PRO_0000446151" description="Conglutin delta-3 small chain" evidence="1">
    <location>
        <begin position="23"/>
        <end position="59"/>
    </location>
</feature>
<feature type="chain" id="PRO_0000446152" description="Conglutin delta-3 large chain" evidence="1">
    <location>
        <begin position="73"/>
        <end position="149"/>
    </location>
</feature>
<feature type="disulfide bond" evidence="3">
    <location>
        <begin position="30"/>
        <end position="98"/>
    </location>
</feature>
<feature type="disulfide bond" description="Interchain (between small and large chains, with C-98 in large chain)" evidence="2">
    <location>
        <position position="30"/>
    </location>
</feature>
<feature type="disulfide bond" description="Or C-45 with C-104" evidence="3">
    <location>
        <begin position="42"/>
        <end position="86"/>
    </location>
</feature>
<feature type="disulfide bond" description="Interchain (between small and large chains, with C-86 or C-87 in large chain)" evidence="2">
    <location>
        <position position="42"/>
    </location>
</feature>
<feature type="disulfide bond" description="Interchain (between small and large chains, with C-42 in small chain) (or C-87)" evidence="1">
    <location>
        <position position="86"/>
    </location>
</feature>
<feature type="disulfide bond" description="Or C-103 with C-152" evidence="3">
    <location>
        <begin position="87"/>
        <end position="134"/>
    </location>
</feature>
<feature type="disulfide bond" description="Or C-86 with C-134" evidence="1">
    <location>
        <begin position="87"/>
        <end position="134"/>
    </location>
</feature>
<feature type="disulfide bond" description="Interchain (between small and large chains, with C-30 in small chain)" evidence="1">
    <location>
        <position position="98"/>
    </location>
</feature>
<feature type="disulfide bond" evidence="1">
    <location>
        <begin position="100"/>
        <end position="142"/>
    </location>
</feature>
<feature type="sequence conflict" description="In Ref. 1; AEB33723." evidence="8" ref="1">
    <original>E</original>
    <variation>Q</variation>
    <location>
        <position position="92"/>
    </location>
</feature>